<accession>Q9DUC1</accession>
<comment type="function">
    <text evidence="1">Self-assembles to form an icosahedral capsid with a T=1 symmetry, about 30 nm in diameter, and consisting of 60 capsid proteins. The capsid encapsulates the genomic DNA. Capsid protein is involved in attachment and entry into the host cell (By similarity).</text>
</comment>
<comment type="subcellular location">
    <subcellularLocation>
        <location evidence="4">Virion</location>
    </subcellularLocation>
</comment>
<comment type="similarity">
    <text evidence="4">Belongs to the anelloviridae capsid protein family.</text>
</comment>
<keyword id="KW-0167">Capsid protein</keyword>
<keyword id="KW-0175">Coiled coil</keyword>
<keyword id="KW-1185">Reference proteome</keyword>
<keyword id="KW-1140">T=1 icosahedral capsid protein</keyword>
<keyword id="KW-0946">Virion</keyword>
<evidence type="ECO:0000250" key="1"/>
<evidence type="ECO:0000255" key="2"/>
<evidence type="ECO:0000256" key="3">
    <source>
        <dbReference type="SAM" id="MobiDB-lite"/>
    </source>
</evidence>
<evidence type="ECO:0000305" key="4"/>
<name>CAPSD_TTVE1</name>
<organism>
    <name type="scientific">Torque teno tamarin virus (isolate So-TTV2)</name>
    <dbReference type="NCBI Taxonomy" id="766186"/>
    <lineage>
        <taxon>Viruses</taxon>
        <taxon>Viruses incertae sedis</taxon>
        <taxon>Anelloviridae</taxon>
        <taxon>Epsilontorquevirus</taxon>
        <taxon>Epsilontorquevirus calli1</taxon>
    </lineage>
</organism>
<feature type="chain" id="PRO_0000404273" description="Capsid protein">
    <location>
        <begin position="1"/>
        <end position="712"/>
    </location>
</feature>
<feature type="region of interest" description="Disordered" evidence="3">
    <location>
        <begin position="614"/>
        <end position="633"/>
    </location>
</feature>
<feature type="region of interest" description="Disordered" evidence="3">
    <location>
        <begin position="646"/>
        <end position="665"/>
    </location>
</feature>
<feature type="coiled-coil region" evidence="2">
    <location>
        <begin position="670"/>
        <end position="706"/>
    </location>
</feature>
<reference key="1">
    <citation type="journal article" date="2000" name="Virology">
        <title>Species-specific TT viruses in humans and nonhuman primates and their phylogenetic relatedness.</title>
        <authorList>
            <person name="Okamoto H."/>
            <person name="Nishizawa T."/>
            <person name="Tawara A."/>
            <person name="Peng Y."/>
            <person name="Takahashi M."/>
            <person name="Kishimoto J."/>
            <person name="Tanaka T."/>
            <person name="Miyakawa Y."/>
            <person name="Mayumi M."/>
        </authorList>
    </citation>
    <scope>NUCLEOTIDE SEQUENCE [GENOMIC DNA]</scope>
</reference>
<proteinExistence type="inferred from homology"/>
<protein>
    <recommendedName>
        <fullName>Capsid protein</fullName>
    </recommendedName>
</protein>
<organismHost>
    <name type="scientific">Saguinus imperator</name>
    <name type="common">Emperor tamarin</name>
    <dbReference type="NCBI Taxonomy" id="9491"/>
</organismHost>
<gene>
    <name type="ORF">ORF1</name>
</gene>
<sequence length="712" mass="84927">MAYGRRYWRRRRWRRRGGRWWRRRRPWKTRWRRRRRRWRRRRYGRRARRFRRRHRVGRWRKLFRRVKSRVVRQWDPNVTRRCMINGYDHALFWGQQAQHRILYDNLPWPIKKEGTQEGGSMNMMQLTLQFLYKDNLAGRNRWTRSNWDMDLAKYHETTLLFPRHRNYSYVVFITRGPNDILDEHTYPGLHPEKMLGRRKKIVVWSKDLRPHGKNYIRVRVPPPQVFKNQWYFQRDICQMPILTLGFAAFDPVNVTLAGNMANSSIILWGIPYWSRPMPYNTWYDYWTKCAGPQNIPWSDRQTNIAAGITQKSAQTCLKLKNKHFGLTNTAIVSDYDKDNIDKNTKQIKTIVMSLNRWYPKWPMKWKDAGDINTQTPFPYRYSWREDQGWGNKVRLWTRECRTDIPEETLGIENMPLYVLMNGYIDYVTNHSTHSPLNWVVSVFCPYTDPPMTNVIPVGKDWFIQNVEPGENKYPSDNADNTFAPGEKTKIKNYDSSKDEFTGNVIRAPDVYDSLPAQQALYIASPFSLKWAQTTGSIVFFYQSKWTWGGDFPRQRPIIDPCNRPKWGGLPVTGYDETGLLLQNPEKAEARARGHLGDLRRGDLTKTALKRLMELTSTEEGSPQKKKRRDKEVRTTADLLRPEDVYCWMSPTPETPPKAGKTPESSFAETYDNHTKLAKRVKKEIHNQNRRHRLLLAHLRRERDRLLGHHLLR</sequence>
<dbReference type="EMBL" id="AB041960">
    <property type="protein sequence ID" value="BAB19316.1"/>
    <property type="molecule type" value="Genomic_DNA"/>
</dbReference>
<dbReference type="RefSeq" id="YP_003587880.1">
    <property type="nucleotide sequence ID" value="NC_014085.1"/>
</dbReference>
<dbReference type="SMR" id="Q9DUC1"/>
<dbReference type="KEGG" id="vg:9086643"/>
<dbReference type="Proteomes" id="UP000008780">
    <property type="component" value="Segment"/>
</dbReference>
<dbReference type="GO" id="GO:0039615">
    <property type="term" value="C:T=1 icosahedral viral capsid"/>
    <property type="evidence" value="ECO:0007669"/>
    <property type="project" value="UniProtKB-KW"/>
</dbReference>
<dbReference type="InterPro" id="IPR004219">
    <property type="entry name" value="TTvirus_Unk"/>
</dbReference>
<dbReference type="Pfam" id="PF02956">
    <property type="entry name" value="TT_ORF1"/>
    <property type="match status" value="1"/>
</dbReference>